<reference key="1">
    <citation type="journal article" date="1999" name="Proc. Natl. Acad. Sci. U.S.A.">
        <title>The Arabidopsis cullin AtCUL1 is modified by the ubiquitin-related protein RUB1.</title>
        <authorList>
            <person name="del Pozo J.C."/>
            <person name="Estelle M."/>
        </authorList>
    </citation>
    <scope>NUCLEOTIDE SEQUENCE [MRNA] (ISOFORM 1)</scope>
    <scope>FUNCTION</scope>
</reference>
<reference key="2">
    <citation type="journal article" date="1998" name="Nature">
        <title>Analysis of 1.9 Mb of contiguous sequence from chromosome 4 of Arabidopsis thaliana.</title>
        <authorList>
            <person name="Bevan M."/>
            <person name="Bancroft I."/>
            <person name="Bent E."/>
            <person name="Love K."/>
            <person name="Goodman H.M."/>
            <person name="Dean C."/>
            <person name="Bergkamp R."/>
            <person name="Dirkse W."/>
            <person name="van Staveren M."/>
            <person name="Stiekema W."/>
            <person name="Drost L."/>
            <person name="Ridley P."/>
            <person name="Hudson S.-A."/>
            <person name="Patel K."/>
            <person name="Murphy G."/>
            <person name="Piffanelli P."/>
            <person name="Wedler H."/>
            <person name="Wedler E."/>
            <person name="Wambutt R."/>
            <person name="Weitzenegger T."/>
            <person name="Pohl T."/>
            <person name="Terryn N."/>
            <person name="Gielen J."/>
            <person name="Villarroel R."/>
            <person name="De Clercq R."/>
            <person name="van Montagu M."/>
            <person name="Lecharny A."/>
            <person name="Aubourg S."/>
            <person name="Gy I."/>
            <person name="Kreis M."/>
            <person name="Lao N."/>
            <person name="Kavanagh T."/>
            <person name="Hempel S."/>
            <person name="Kotter P."/>
            <person name="Entian K.-D."/>
            <person name="Rieger M."/>
            <person name="Schaefer M."/>
            <person name="Funk B."/>
            <person name="Mueller-Auer S."/>
            <person name="Silvey M."/>
            <person name="James R."/>
            <person name="Monfort A."/>
            <person name="Pons A."/>
            <person name="Puigdomenech P."/>
            <person name="Douka A."/>
            <person name="Voukelatou E."/>
            <person name="Milioni D."/>
            <person name="Hatzopoulos P."/>
            <person name="Piravandi E."/>
            <person name="Obermaier B."/>
            <person name="Hilbert H."/>
            <person name="Duesterhoeft A."/>
            <person name="Moores T."/>
            <person name="Jones J.D.G."/>
            <person name="Eneva T."/>
            <person name="Palme K."/>
            <person name="Benes V."/>
            <person name="Rechmann S."/>
            <person name="Ansorge W."/>
            <person name="Cooke R."/>
            <person name="Berger C."/>
            <person name="Delseny M."/>
            <person name="Voet M."/>
            <person name="Volckaert G."/>
            <person name="Mewes H.-W."/>
            <person name="Klosterman S."/>
            <person name="Schueller C."/>
            <person name="Chalwatzis N."/>
        </authorList>
    </citation>
    <scope>NUCLEOTIDE SEQUENCE [LARGE SCALE GENOMIC DNA]</scope>
    <source>
        <strain>cv. Columbia</strain>
    </source>
</reference>
<reference key="3">
    <citation type="journal article" date="1999" name="Nature">
        <title>Sequence and analysis of chromosome 4 of the plant Arabidopsis thaliana.</title>
        <authorList>
            <person name="Mayer K.F.X."/>
            <person name="Schueller C."/>
            <person name="Wambutt R."/>
            <person name="Murphy G."/>
            <person name="Volckaert G."/>
            <person name="Pohl T."/>
            <person name="Duesterhoeft A."/>
            <person name="Stiekema W."/>
            <person name="Entian K.-D."/>
            <person name="Terryn N."/>
            <person name="Harris B."/>
            <person name="Ansorge W."/>
            <person name="Brandt P."/>
            <person name="Grivell L.A."/>
            <person name="Rieger M."/>
            <person name="Weichselgartner M."/>
            <person name="de Simone V."/>
            <person name="Obermaier B."/>
            <person name="Mache R."/>
            <person name="Mueller M."/>
            <person name="Kreis M."/>
            <person name="Delseny M."/>
            <person name="Puigdomenech P."/>
            <person name="Watson M."/>
            <person name="Schmidtheini T."/>
            <person name="Reichert B."/>
            <person name="Portetelle D."/>
            <person name="Perez-Alonso M."/>
            <person name="Boutry M."/>
            <person name="Bancroft I."/>
            <person name="Vos P."/>
            <person name="Hoheisel J."/>
            <person name="Zimmermann W."/>
            <person name="Wedler H."/>
            <person name="Ridley P."/>
            <person name="Langham S.-A."/>
            <person name="McCullagh B."/>
            <person name="Bilham L."/>
            <person name="Robben J."/>
            <person name="van der Schueren J."/>
            <person name="Grymonprez B."/>
            <person name="Chuang Y.-J."/>
            <person name="Vandenbussche F."/>
            <person name="Braeken M."/>
            <person name="Weltjens I."/>
            <person name="Voet M."/>
            <person name="Bastiaens I."/>
            <person name="Aert R."/>
            <person name="Defoor E."/>
            <person name="Weitzenegger T."/>
            <person name="Bothe G."/>
            <person name="Ramsperger U."/>
            <person name="Hilbert H."/>
            <person name="Braun M."/>
            <person name="Holzer E."/>
            <person name="Brandt A."/>
            <person name="Peters S."/>
            <person name="van Staveren M."/>
            <person name="Dirkse W."/>
            <person name="Mooijman P."/>
            <person name="Klein Lankhorst R."/>
            <person name="Rose M."/>
            <person name="Hauf J."/>
            <person name="Koetter P."/>
            <person name="Berneiser S."/>
            <person name="Hempel S."/>
            <person name="Feldpausch M."/>
            <person name="Lamberth S."/>
            <person name="Van den Daele H."/>
            <person name="De Keyser A."/>
            <person name="Buysshaert C."/>
            <person name="Gielen J."/>
            <person name="Villarroel R."/>
            <person name="De Clercq R."/>
            <person name="van Montagu M."/>
            <person name="Rogers J."/>
            <person name="Cronin A."/>
            <person name="Quail M.A."/>
            <person name="Bray-Allen S."/>
            <person name="Clark L."/>
            <person name="Doggett J."/>
            <person name="Hall S."/>
            <person name="Kay M."/>
            <person name="Lennard N."/>
            <person name="McLay K."/>
            <person name="Mayes R."/>
            <person name="Pettett A."/>
            <person name="Rajandream M.A."/>
            <person name="Lyne M."/>
            <person name="Benes V."/>
            <person name="Rechmann S."/>
            <person name="Borkova D."/>
            <person name="Bloecker H."/>
            <person name="Scharfe M."/>
            <person name="Grimm M."/>
            <person name="Loehnert T.-H."/>
            <person name="Dose S."/>
            <person name="de Haan M."/>
            <person name="Maarse A.C."/>
            <person name="Schaefer M."/>
            <person name="Mueller-Auer S."/>
            <person name="Gabel C."/>
            <person name="Fuchs M."/>
            <person name="Fartmann B."/>
            <person name="Granderath K."/>
            <person name="Dauner D."/>
            <person name="Herzl A."/>
            <person name="Neumann S."/>
            <person name="Argiriou A."/>
            <person name="Vitale D."/>
            <person name="Liguori R."/>
            <person name="Piravandi E."/>
            <person name="Massenet O."/>
            <person name="Quigley F."/>
            <person name="Clabauld G."/>
            <person name="Muendlein A."/>
            <person name="Felber R."/>
            <person name="Schnabl S."/>
            <person name="Hiller R."/>
            <person name="Schmidt W."/>
            <person name="Lecharny A."/>
            <person name="Aubourg S."/>
            <person name="Chefdor F."/>
            <person name="Cooke R."/>
            <person name="Berger C."/>
            <person name="Monfort A."/>
            <person name="Casacuberta E."/>
            <person name="Gibbons T."/>
            <person name="Weber N."/>
            <person name="Vandenbol M."/>
            <person name="Bargues M."/>
            <person name="Terol J."/>
            <person name="Torres A."/>
            <person name="Perez-Perez A."/>
            <person name="Purnelle B."/>
            <person name="Bent E."/>
            <person name="Johnson S."/>
            <person name="Tacon D."/>
            <person name="Jesse T."/>
            <person name="Heijnen L."/>
            <person name="Schwarz S."/>
            <person name="Scholler P."/>
            <person name="Heber S."/>
            <person name="Francs P."/>
            <person name="Bielke C."/>
            <person name="Frishman D."/>
            <person name="Haase D."/>
            <person name="Lemcke K."/>
            <person name="Mewes H.-W."/>
            <person name="Stocker S."/>
            <person name="Zaccaria P."/>
            <person name="Bevan M."/>
            <person name="Wilson R.K."/>
            <person name="de la Bastide M."/>
            <person name="Habermann K."/>
            <person name="Parnell L."/>
            <person name="Dedhia N."/>
            <person name="Gnoj L."/>
            <person name="Schutz K."/>
            <person name="Huang E."/>
            <person name="Spiegel L."/>
            <person name="Sekhon M."/>
            <person name="Murray J."/>
            <person name="Sheet P."/>
            <person name="Cordes M."/>
            <person name="Abu-Threideh J."/>
            <person name="Stoneking T."/>
            <person name="Kalicki J."/>
            <person name="Graves T."/>
            <person name="Harmon G."/>
            <person name="Edwards J."/>
            <person name="Latreille P."/>
            <person name="Courtney L."/>
            <person name="Cloud J."/>
            <person name="Abbott A."/>
            <person name="Scott K."/>
            <person name="Johnson D."/>
            <person name="Minx P."/>
            <person name="Bentley D."/>
            <person name="Fulton B."/>
            <person name="Miller N."/>
            <person name="Greco T."/>
            <person name="Kemp K."/>
            <person name="Kramer J."/>
            <person name="Fulton L."/>
            <person name="Mardis E."/>
            <person name="Dante M."/>
            <person name="Pepin K."/>
            <person name="Hillier L.W."/>
            <person name="Nelson J."/>
            <person name="Spieth J."/>
            <person name="Ryan E."/>
            <person name="Andrews S."/>
            <person name="Geisel C."/>
            <person name="Layman D."/>
            <person name="Du H."/>
            <person name="Ali J."/>
            <person name="Berghoff A."/>
            <person name="Jones K."/>
            <person name="Drone K."/>
            <person name="Cotton M."/>
            <person name="Joshu C."/>
            <person name="Antonoiu B."/>
            <person name="Zidanic M."/>
            <person name="Strong C."/>
            <person name="Sun H."/>
            <person name="Lamar B."/>
            <person name="Yordan C."/>
            <person name="Ma P."/>
            <person name="Zhong J."/>
            <person name="Preston R."/>
            <person name="Vil D."/>
            <person name="Shekher M."/>
            <person name="Matero A."/>
            <person name="Shah R."/>
            <person name="Swaby I.K."/>
            <person name="O'Shaughnessy A."/>
            <person name="Rodriguez M."/>
            <person name="Hoffman J."/>
            <person name="Till S."/>
            <person name="Granat S."/>
            <person name="Shohdy N."/>
            <person name="Hasegawa A."/>
            <person name="Hameed A."/>
            <person name="Lodhi M."/>
            <person name="Johnson A."/>
            <person name="Chen E."/>
            <person name="Marra M.A."/>
            <person name="Martienssen R."/>
            <person name="McCombie W.R."/>
        </authorList>
    </citation>
    <scope>NUCLEOTIDE SEQUENCE [LARGE SCALE GENOMIC DNA]</scope>
    <source>
        <strain>cv. Columbia</strain>
    </source>
</reference>
<reference key="4">
    <citation type="journal article" date="2017" name="Plant J.">
        <title>Araport11: a complete reannotation of the Arabidopsis thaliana reference genome.</title>
        <authorList>
            <person name="Cheng C.Y."/>
            <person name="Krishnakumar V."/>
            <person name="Chan A.P."/>
            <person name="Thibaud-Nissen F."/>
            <person name="Schobel S."/>
            <person name="Town C.D."/>
        </authorList>
    </citation>
    <scope>GENOME REANNOTATION</scope>
    <source>
        <strain>cv. Columbia</strain>
    </source>
</reference>
<reference key="5">
    <citation type="journal article" date="2003" name="Science">
        <title>Empirical analysis of transcriptional activity in the Arabidopsis genome.</title>
        <authorList>
            <person name="Yamada K."/>
            <person name="Lim J."/>
            <person name="Dale J.M."/>
            <person name="Chen H."/>
            <person name="Shinn P."/>
            <person name="Palm C.J."/>
            <person name="Southwick A.M."/>
            <person name="Wu H.C."/>
            <person name="Kim C.J."/>
            <person name="Nguyen M."/>
            <person name="Pham P.K."/>
            <person name="Cheuk R.F."/>
            <person name="Karlin-Newmann G."/>
            <person name="Liu S.X."/>
            <person name="Lam B."/>
            <person name="Sakano H."/>
            <person name="Wu T."/>
            <person name="Yu G."/>
            <person name="Miranda M."/>
            <person name="Quach H.L."/>
            <person name="Tripp M."/>
            <person name="Chang C.H."/>
            <person name="Lee J.M."/>
            <person name="Toriumi M.J."/>
            <person name="Chan M.M."/>
            <person name="Tang C.C."/>
            <person name="Onodera C.S."/>
            <person name="Deng J.M."/>
            <person name="Akiyama K."/>
            <person name="Ansari Y."/>
            <person name="Arakawa T."/>
            <person name="Banh J."/>
            <person name="Banno F."/>
            <person name="Bowser L."/>
            <person name="Brooks S.Y."/>
            <person name="Carninci P."/>
            <person name="Chao Q."/>
            <person name="Choy N."/>
            <person name="Enju A."/>
            <person name="Goldsmith A.D."/>
            <person name="Gurjal M."/>
            <person name="Hansen N.F."/>
            <person name="Hayashizaki Y."/>
            <person name="Johnson-Hopson C."/>
            <person name="Hsuan V.W."/>
            <person name="Iida K."/>
            <person name="Karnes M."/>
            <person name="Khan S."/>
            <person name="Koesema E."/>
            <person name="Ishida J."/>
            <person name="Jiang P.X."/>
            <person name="Jones T."/>
            <person name="Kawai J."/>
            <person name="Kamiya A."/>
            <person name="Meyers C."/>
            <person name="Nakajima M."/>
            <person name="Narusaka M."/>
            <person name="Seki M."/>
            <person name="Sakurai T."/>
            <person name="Satou M."/>
            <person name="Tamse R."/>
            <person name="Vaysberg M."/>
            <person name="Wallender E.K."/>
            <person name="Wong C."/>
            <person name="Yamamura Y."/>
            <person name="Yuan S."/>
            <person name="Shinozaki K."/>
            <person name="Davis R.W."/>
            <person name="Theologis A."/>
            <person name="Ecker J.R."/>
        </authorList>
    </citation>
    <scope>NUCLEOTIDE SEQUENCE [LARGE SCALE MRNA] (ISOFORM 1)</scope>
    <source>
        <strain>cv. Columbia</strain>
    </source>
</reference>
<reference key="6">
    <citation type="submission" date="2006-07" db="EMBL/GenBank/DDBJ databases">
        <title>Large-scale analysis of RIKEN Arabidopsis full-length (RAFL) cDNAs.</title>
        <authorList>
            <person name="Totoki Y."/>
            <person name="Seki M."/>
            <person name="Ishida J."/>
            <person name="Nakajima M."/>
            <person name="Enju A."/>
            <person name="Kamiya A."/>
            <person name="Narusaka M."/>
            <person name="Shin-i T."/>
            <person name="Nakagawa M."/>
            <person name="Sakamoto N."/>
            <person name="Oishi K."/>
            <person name="Kohara Y."/>
            <person name="Kobayashi M."/>
            <person name="Toyoda A."/>
            <person name="Sakaki Y."/>
            <person name="Sakurai T."/>
            <person name="Iida K."/>
            <person name="Akiyama K."/>
            <person name="Satou M."/>
            <person name="Toyoda T."/>
            <person name="Konagaya A."/>
            <person name="Carninci P."/>
            <person name="Kawai J."/>
            <person name="Hayashizaki Y."/>
            <person name="Shinozaki K."/>
        </authorList>
    </citation>
    <scope>NUCLEOTIDE SEQUENCE [LARGE SCALE MRNA] (ISOFORM 2)</scope>
    <source>
        <strain>cv. Columbia</strain>
    </source>
</reference>
<reference key="7">
    <citation type="journal article" date="2003" name="EMBO J.">
        <title>The RUB/Nedd8 conjugation pathway is required for early development in Arabidopsis.</title>
        <authorList>
            <person name="Dharmasiri S."/>
            <person name="Dharmasiri N."/>
            <person name="Hellmann H."/>
            <person name="Estelle M."/>
        </authorList>
    </citation>
    <scope>TISSUE SPECIFICITY</scope>
    <scope>FUNCTION</scope>
    <scope>INTERACTION WITH RBX1</scope>
</reference>
<name>RCE1_ARATH</name>
<organism>
    <name type="scientific">Arabidopsis thaliana</name>
    <name type="common">Mouse-ear cress</name>
    <dbReference type="NCBI Taxonomy" id="3702"/>
    <lineage>
        <taxon>Eukaryota</taxon>
        <taxon>Viridiplantae</taxon>
        <taxon>Streptophyta</taxon>
        <taxon>Embryophyta</taxon>
        <taxon>Tracheophyta</taxon>
        <taxon>Spermatophyta</taxon>
        <taxon>Magnoliopsida</taxon>
        <taxon>eudicotyledons</taxon>
        <taxon>Gunneridae</taxon>
        <taxon>Pentapetalae</taxon>
        <taxon>rosids</taxon>
        <taxon>malvids</taxon>
        <taxon>Brassicales</taxon>
        <taxon>Brassicaceae</taxon>
        <taxon>Camelineae</taxon>
        <taxon>Arabidopsis</taxon>
    </lineage>
</organism>
<evidence type="ECO:0000255" key="1">
    <source>
        <dbReference type="PROSITE-ProRule" id="PRU00388"/>
    </source>
</evidence>
<evidence type="ECO:0000255" key="2">
    <source>
        <dbReference type="PROSITE-ProRule" id="PRU10133"/>
    </source>
</evidence>
<evidence type="ECO:0000269" key="3">
    <source>
    </source>
</evidence>
<evidence type="ECO:0000269" key="4">
    <source>
    </source>
</evidence>
<evidence type="ECO:0000303" key="5">
    <source ref="6"/>
</evidence>
<evidence type="ECO:0000305" key="6"/>
<proteinExistence type="evidence at protein level"/>
<sequence length="184" mass="20787">MIGLFKVKEKQREQAQNATRGGASVKKQSAGELRLHKDISELNLPSSCSISFPNGKDDLMNFEVSIKPDDGYYHNGTFVFTFQVSPVYPHEAPKVKCKTKVYHPNIDLEGNVCLNILREDWKPVLNINTVIYGLFHLFTEPNSEDPLNHDAAAVLRDNPKLFETNVRRAMTGGYVGQTFFPRCI</sequence>
<keyword id="KW-0025">Alternative splicing</keyword>
<keyword id="KW-0067">ATP-binding</keyword>
<keyword id="KW-0547">Nucleotide-binding</keyword>
<keyword id="KW-1185">Reference proteome</keyword>
<keyword id="KW-0808">Transferase</keyword>
<keyword id="KW-0833">Ubl conjugation pathway</keyword>
<protein>
    <recommendedName>
        <fullName>NEDD8-conjugating enzyme Ubc12</fullName>
        <ecNumber>2.3.2.-</ecNumber>
    </recommendedName>
    <alternativeName>
        <fullName>RUB1 carrier protein 1</fullName>
    </alternativeName>
    <alternativeName>
        <fullName>RUB1-conjugating enzyme 1</fullName>
    </alternativeName>
</protein>
<accession>Q9SDY5</accession>
<accession>O23202</accession>
<accession>Q0WLB1</accession>
<feature type="chain" id="PRO_0000082494" description="NEDD8-conjugating enzyme Ubc12">
    <location>
        <begin position="1"/>
        <end position="184"/>
    </location>
</feature>
<feature type="domain" description="UBC core" evidence="1">
    <location>
        <begin position="30"/>
        <end position="175"/>
    </location>
</feature>
<feature type="active site" description="Glycyl thioester intermediate" evidence="1 2">
    <location>
        <position position="113"/>
    </location>
</feature>
<feature type="splice variant" id="VSP_034924" description="In isoform 2." evidence="5">
    <original>YHPNIDLEGNVCLNILREDWKPVLNINTVIYGLFHLFTEPNSEDPLNHDAAAVLRDNPKLFETNVRRAMTGGYVGQTFFPRCI</original>
    <variation>GLSSFYMPYIVYSFYFKIVCVVETLCWFSCLGLSSQYRFGRKRLPEHL</variation>
    <location>
        <begin position="102"/>
        <end position="184"/>
    </location>
</feature>
<dbReference type="EC" id="2.3.2.-"/>
<dbReference type="EMBL" id="AF202771">
    <property type="protein sequence ID" value="AAF19827.1"/>
    <property type="molecule type" value="mRNA"/>
</dbReference>
<dbReference type="EMBL" id="Z99708">
    <property type="protein sequence ID" value="CAB16820.1"/>
    <property type="status" value="ALT_SEQ"/>
    <property type="molecule type" value="Genomic_DNA"/>
</dbReference>
<dbReference type="EMBL" id="AL161590">
    <property type="protein sequence ID" value="CAB80346.1"/>
    <property type="status" value="ALT_SEQ"/>
    <property type="molecule type" value="Genomic_DNA"/>
</dbReference>
<dbReference type="EMBL" id="CP002687">
    <property type="protein sequence ID" value="AEE86703.1"/>
    <property type="molecule type" value="Genomic_DNA"/>
</dbReference>
<dbReference type="EMBL" id="CP002687">
    <property type="protein sequence ID" value="AEE86704.1"/>
    <property type="molecule type" value="Genomic_DNA"/>
</dbReference>
<dbReference type="EMBL" id="AY048210">
    <property type="protein sequence ID" value="AAK82473.1"/>
    <property type="molecule type" value="mRNA"/>
</dbReference>
<dbReference type="EMBL" id="AY097381">
    <property type="protein sequence ID" value="AAM19897.1"/>
    <property type="molecule type" value="mRNA"/>
</dbReference>
<dbReference type="EMBL" id="AK230295">
    <property type="protein sequence ID" value="BAF02096.1"/>
    <property type="molecule type" value="mRNA"/>
</dbReference>
<dbReference type="PIR" id="E85434">
    <property type="entry name" value="E85434"/>
</dbReference>
<dbReference type="RefSeq" id="NP_001154289.1">
    <molecule id="Q9SDY5-1"/>
    <property type="nucleotide sequence ID" value="NM_001160817.1"/>
</dbReference>
<dbReference type="RefSeq" id="NP_568008.4">
    <molecule id="Q9SDY5-1"/>
    <property type="nucleotide sequence ID" value="NM_119844.6"/>
</dbReference>
<dbReference type="SMR" id="Q9SDY5"/>
<dbReference type="BioGRID" id="15114">
    <property type="interactions" value="5"/>
</dbReference>
<dbReference type="FunCoup" id="Q9SDY5">
    <property type="interactions" value="4493"/>
</dbReference>
<dbReference type="IntAct" id="Q9SDY5">
    <property type="interactions" value="4"/>
</dbReference>
<dbReference type="STRING" id="3702.Q9SDY5"/>
<dbReference type="iPTMnet" id="Q9SDY5"/>
<dbReference type="PaxDb" id="3702-AT4G36800.1"/>
<dbReference type="ProteomicsDB" id="236537">
    <molecule id="Q9SDY5-1"/>
</dbReference>
<dbReference type="EnsemblPlants" id="AT4G36800.1">
    <molecule id="Q9SDY5-1"/>
    <property type="protein sequence ID" value="AT4G36800.1"/>
    <property type="gene ID" value="AT4G36800"/>
</dbReference>
<dbReference type="EnsemblPlants" id="AT4G36800.2">
    <molecule id="Q9SDY5-1"/>
    <property type="protein sequence ID" value="AT4G36800.2"/>
    <property type="gene ID" value="AT4G36800"/>
</dbReference>
<dbReference type="GeneID" id="829833"/>
<dbReference type="Gramene" id="AT4G36800.1">
    <molecule id="Q9SDY5-1"/>
    <property type="protein sequence ID" value="AT4G36800.1"/>
    <property type="gene ID" value="AT4G36800"/>
</dbReference>
<dbReference type="Gramene" id="AT4G36800.2">
    <molecule id="Q9SDY5-1"/>
    <property type="protein sequence ID" value="AT4G36800.2"/>
    <property type="gene ID" value="AT4G36800"/>
</dbReference>
<dbReference type="KEGG" id="ath:AT4G36800"/>
<dbReference type="Araport" id="AT4G36800"/>
<dbReference type="TAIR" id="AT4G36800">
    <property type="gene designation" value="RCE1"/>
</dbReference>
<dbReference type="eggNOG" id="KOG0420">
    <property type="taxonomic scope" value="Eukaryota"/>
</dbReference>
<dbReference type="HOGENOM" id="CLU_030988_6_0_1"/>
<dbReference type="InParanoid" id="Q9SDY5"/>
<dbReference type="OMA" id="YDNIVSP"/>
<dbReference type="OrthoDB" id="1023107at2759"/>
<dbReference type="PhylomeDB" id="Q9SDY5"/>
<dbReference type="UniPathway" id="UPA00885"/>
<dbReference type="PRO" id="PR:Q9SDY5"/>
<dbReference type="Proteomes" id="UP000006548">
    <property type="component" value="Chromosome 4"/>
</dbReference>
<dbReference type="ExpressionAtlas" id="Q9SDY5">
    <property type="expression patterns" value="baseline and differential"/>
</dbReference>
<dbReference type="GO" id="GO:0005524">
    <property type="term" value="F:ATP binding"/>
    <property type="evidence" value="ECO:0007669"/>
    <property type="project" value="UniProtKB-KW"/>
</dbReference>
<dbReference type="GO" id="GO:0019788">
    <property type="term" value="F:NEDD8 transferase activity"/>
    <property type="evidence" value="ECO:0000304"/>
    <property type="project" value="TAIR"/>
</dbReference>
<dbReference type="GO" id="GO:0045116">
    <property type="term" value="P:protein neddylation"/>
    <property type="evidence" value="ECO:0007669"/>
    <property type="project" value="UniProtKB-UniPathway"/>
</dbReference>
<dbReference type="GO" id="GO:0009733">
    <property type="term" value="P:response to auxin"/>
    <property type="evidence" value="ECO:0000315"/>
    <property type="project" value="TAIR"/>
</dbReference>
<dbReference type="CDD" id="cd23794">
    <property type="entry name" value="UBCc_UBE2F_UBE2M"/>
    <property type="match status" value="1"/>
</dbReference>
<dbReference type="FunFam" id="3.10.110.10:FF:000005">
    <property type="entry name" value="NEDD8-conjugating enzyme Ubc12"/>
    <property type="match status" value="1"/>
</dbReference>
<dbReference type="Gene3D" id="3.10.110.10">
    <property type="entry name" value="Ubiquitin Conjugating Enzyme"/>
    <property type="match status" value="1"/>
</dbReference>
<dbReference type="InterPro" id="IPR000608">
    <property type="entry name" value="UBQ-conjugat_E2_core"/>
</dbReference>
<dbReference type="InterPro" id="IPR023313">
    <property type="entry name" value="UBQ-conjugating_AS"/>
</dbReference>
<dbReference type="InterPro" id="IPR016135">
    <property type="entry name" value="UBQ-conjugating_enzyme/RWD"/>
</dbReference>
<dbReference type="PANTHER" id="PTHR24068">
    <property type="entry name" value="UBIQUITIN-CONJUGATING ENZYME E2"/>
    <property type="match status" value="1"/>
</dbReference>
<dbReference type="Pfam" id="PF00179">
    <property type="entry name" value="UQ_con"/>
    <property type="match status" value="1"/>
</dbReference>
<dbReference type="SMART" id="SM00212">
    <property type="entry name" value="UBCc"/>
    <property type="match status" value="1"/>
</dbReference>
<dbReference type="SUPFAM" id="SSF54495">
    <property type="entry name" value="UBC-like"/>
    <property type="match status" value="1"/>
</dbReference>
<dbReference type="PROSITE" id="PS00183">
    <property type="entry name" value="UBC_1"/>
    <property type="match status" value="1"/>
</dbReference>
<dbReference type="PROSITE" id="PS50127">
    <property type="entry name" value="UBC_2"/>
    <property type="match status" value="1"/>
</dbReference>
<gene>
    <name type="primary">RCE1</name>
    <name type="ordered locus">At4g36800</name>
    <name type="ORF">C7A10.560</name>
</gene>
<comment type="function">
    <text evidence="3 4">Accepts the ubiquitin-like protein NEDD8/RUB1 from the ECR1-AXR1 E1 complex and catalyzes its covalent attachment to other proteins.</text>
</comment>
<comment type="pathway">
    <text>Protein modification; protein neddylation.</text>
</comment>
<comment type="subunit">
    <text evidence="4">Interacts with RBX1.</text>
</comment>
<comment type="interaction">
    <interactant intactId="EBI-595116">
        <id>Q9SDY5</id>
    </interactant>
    <interactant intactId="EBI-532404">
        <id>Q940X7</id>
        <label>RBX1A</label>
    </interactant>
    <organismsDiffer>false</organismsDiffer>
    <experiments>2</experiments>
</comment>
<comment type="alternative products">
    <event type="alternative splicing"/>
    <isoform>
        <id>Q9SDY5-1</id>
        <name>1</name>
        <sequence type="displayed"/>
    </isoform>
    <isoform>
        <id>Q9SDY5-2</id>
        <name>2</name>
        <sequence type="described" ref="VSP_034924"/>
    </isoform>
</comment>
<comment type="tissue specificity">
    <text evidence="4">Expressed in shoot, root and floral meristems, and in vascular tissues of leaves.</text>
</comment>
<comment type="miscellaneous">
    <text>Reduction in RCE1 levels leads to reduced organ length and defects in gravitropism.</text>
</comment>
<comment type="miscellaneous">
    <molecule>Isoform 2</molecule>
    <text evidence="6">May be due to intron retention.</text>
</comment>
<comment type="similarity">
    <text evidence="1">Belongs to the ubiquitin-conjugating enzyme family. UBC12 subfamily.</text>
</comment>
<comment type="sequence caution" evidence="6">
    <conflict type="erroneous gene model prediction">
        <sequence resource="EMBL-CDS" id="CAB16820"/>
    </conflict>
</comment>
<comment type="sequence caution" evidence="6">
    <conflict type="erroneous gene model prediction">
        <sequence resource="EMBL-CDS" id="CAB80346"/>
    </conflict>
</comment>